<gene>
    <name type="primary">Cks1b</name>
    <name type="synonym">Cks1</name>
    <name type="synonym">Sid1334</name>
</gene>
<dbReference type="EMBL" id="AB025409">
    <property type="protein sequence ID" value="BAA84694.1"/>
    <property type="molecule type" value="mRNA"/>
</dbReference>
<dbReference type="EMBL" id="AK010414">
    <property type="protein sequence ID" value="BAC25295.1"/>
    <property type="molecule type" value="mRNA"/>
</dbReference>
<dbReference type="EMBL" id="AK011782">
    <property type="protein sequence ID" value="BAB27837.1"/>
    <property type="molecule type" value="mRNA"/>
</dbReference>
<dbReference type="EMBL" id="BC076579">
    <property type="protein sequence ID" value="AAH76579.1"/>
    <property type="molecule type" value="mRNA"/>
</dbReference>
<dbReference type="CCDS" id="CCDS38493.1"/>
<dbReference type="RefSeq" id="NP_058600.1">
    <property type="nucleotide sequence ID" value="NM_016904.1"/>
</dbReference>
<dbReference type="SMR" id="P61025"/>
<dbReference type="BioGRID" id="207564">
    <property type="interactions" value="3"/>
</dbReference>
<dbReference type="FunCoup" id="P61025">
    <property type="interactions" value="316"/>
</dbReference>
<dbReference type="STRING" id="10090.ENSMUSP00000029679"/>
<dbReference type="iPTMnet" id="P61025"/>
<dbReference type="PhosphoSitePlus" id="P61025"/>
<dbReference type="PaxDb" id="10090-ENSMUSP00000029679"/>
<dbReference type="PeptideAtlas" id="P61025"/>
<dbReference type="ProteomicsDB" id="281634"/>
<dbReference type="Pumba" id="P61025"/>
<dbReference type="Antibodypedia" id="47036">
    <property type="antibodies" value="246 antibodies from 26 providers"/>
</dbReference>
<dbReference type="DNASU" id="54124"/>
<dbReference type="Ensembl" id="ENSMUST00000029679.4">
    <property type="protein sequence ID" value="ENSMUSP00000029679.4"/>
    <property type="gene ID" value="ENSMUSG00000028044.7"/>
</dbReference>
<dbReference type="GeneID" id="54124"/>
<dbReference type="KEGG" id="mmu:54124"/>
<dbReference type="UCSC" id="uc008pzl.1">
    <property type="organism name" value="mouse"/>
</dbReference>
<dbReference type="AGR" id="MGI:1889208"/>
<dbReference type="CTD" id="1163"/>
<dbReference type="MGI" id="MGI:1889208">
    <property type="gene designation" value="Cks1b"/>
</dbReference>
<dbReference type="VEuPathDB" id="HostDB:ENSMUSG00000028044"/>
<dbReference type="eggNOG" id="KOG3484">
    <property type="taxonomic scope" value="Eukaryota"/>
</dbReference>
<dbReference type="GeneTree" id="ENSGT00950000182971"/>
<dbReference type="HOGENOM" id="CLU_140546_2_0_1"/>
<dbReference type="InParanoid" id="P61025"/>
<dbReference type="OMA" id="MSENEWR"/>
<dbReference type="OrthoDB" id="440676at2759"/>
<dbReference type="PhylomeDB" id="P61025"/>
<dbReference type="TreeFam" id="TF101142"/>
<dbReference type="Reactome" id="R-MMU-187577">
    <property type="pathway name" value="SCF(Skp2)-mediated degradation of p27/p21"/>
</dbReference>
<dbReference type="Reactome" id="R-MMU-69231">
    <property type="pathway name" value="Cyclin D associated events in G1"/>
</dbReference>
<dbReference type="BioGRID-ORCS" id="54124">
    <property type="hits" value="9 hits in 82 CRISPR screens"/>
</dbReference>
<dbReference type="ChiTaRS" id="Cks1b">
    <property type="organism name" value="mouse"/>
</dbReference>
<dbReference type="PRO" id="PR:P61025"/>
<dbReference type="Proteomes" id="UP000000589">
    <property type="component" value="Chromosome 3"/>
</dbReference>
<dbReference type="RNAct" id="P61025">
    <property type="molecule type" value="protein"/>
</dbReference>
<dbReference type="Bgee" id="ENSMUSG00000028044">
    <property type="expression patterns" value="Expressed in endocardial cushion and 247 other cell types or tissues"/>
</dbReference>
<dbReference type="ExpressionAtlas" id="P61025">
    <property type="expression patterns" value="baseline and differential"/>
</dbReference>
<dbReference type="GO" id="GO:0016538">
    <property type="term" value="F:cyclin-dependent protein serine/threonine kinase regulator activity"/>
    <property type="evidence" value="ECO:0007669"/>
    <property type="project" value="InterPro"/>
</dbReference>
<dbReference type="GO" id="GO:0051301">
    <property type="term" value="P:cell division"/>
    <property type="evidence" value="ECO:0007669"/>
    <property type="project" value="UniProtKB-KW"/>
</dbReference>
<dbReference type="GO" id="GO:0048144">
    <property type="term" value="P:fibroblast proliferation"/>
    <property type="evidence" value="ECO:0000316"/>
    <property type="project" value="MGI"/>
</dbReference>
<dbReference type="GO" id="GO:0044772">
    <property type="term" value="P:mitotic cell cycle phase transition"/>
    <property type="evidence" value="ECO:0000316"/>
    <property type="project" value="MGI"/>
</dbReference>
<dbReference type="GO" id="GO:0006355">
    <property type="term" value="P:regulation of DNA-templated transcription"/>
    <property type="evidence" value="ECO:0000316"/>
    <property type="project" value="MGI"/>
</dbReference>
<dbReference type="FunFam" id="3.30.170.10:FF:000001">
    <property type="entry name" value="Cyclin-dependent kinases regulatory subunit"/>
    <property type="match status" value="1"/>
</dbReference>
<dbReference type="Gene3D" id="3.30.170.10">
    <property type="entry name" value="Cyclin-dependent kinase, regulatory subunit"/>
    <property type="match status" value="1"/>
</dbReference>
<dbReference type="InterPro" id="IPR000789">
    <property type="entry name" value="Cyclin-dep_kinase_reg-sub"/>
</dbReference>
<dbReference type="InterPro" id="IPR036858">
    <property type="entry name" value="Cyclin-dep_kinase_reg-sub_sf"/>
</dbReference>
<dbReference type="PANTHER" id="PTHR23415">
    <property type="entry name" value="CYCLIN-DEPENDENT KINASES REGULATORY SUBUNIT/60S RIBOSOME SUBUNIT BIOGENESIS PROTEIN NIP7"/>
    <property type="match status" value="1"/>
</dbReference>
<dbReference type="Pfam" id="PF01111">
    <property type="entry name" value="CKS"/>
    <property type="match status" value="1"/>
</dbReference>
<dbReference type="PRINTS" id="PR00296">
    <property type="entry name" value="CYCLINKINASE"/>
</dbReference>
<dbReference type="SMART" id="SM01084">
    <property type="entry name" value="CKS"/>
    <property type="match status" value="1"/>
</dbReference>
<dbReference type="SUPFAM" id="SSF55637">
    <property type="entry name" value="Cell cycle regulatory proteins"/>
    <property type="match status" value="1"/>
</dbReference>
<dbReference type="PROSITE" id="PS00944">
    <property type="entry name" value="CKS_1"/>
    <property type="match status" value="1"/>
</dbReference>
<dbReference type="PROSITE" id="PS00945">
    <property type="entry name" value="CKS_2"/>
    <property type="match status" value="1"/>
</dbReference>
<feature type="initiator methionine" description="Removed" evidence="2">
    <location>
        <position position="1"/>
    </location>
</feature>
<feature type="chain" id="PRO_0000206236" description="Cyclin-dependent kinases regulatory subunit 1">
    <location>
        <begin position="2"/>
        <end position="79"/>
    </location>
</feature>
<feature type="modified residue" description="N-acetylserine" evidence="2">
    <location>
        <position position="2"/>
    </location>
</feature>
<accession>P61025</accession>
<accession>P33551</accession>
<accession>Q6ZWX7</accession>
<protein>
    <recommendedName>
        <fullName>Cyclin-dependent kinases regulatory subunit 1</fullName>
        <shortName>CKS-1</shortName>
    </recommendedName>
    <alternativeName>
        <fullName>Sid 1334</fullName>
    </alternativeName>
</protein>
<name>CKS1_MOUSE</name>
<proteinExistence type="inferred from homology"/>
<organism>
    <name type="scientific">Mus musculus</name>
    <name type="common">Mouse</name>
    <dbReference type="NCBI Taxonomy" id="10090"/>
    <lineage>
        <taxon>Eukaryota</taxon>
        <taxon>Metazoa</taxon>
        <taxon>Chordata</taxon>
        <taxon>Craniata</taxon>
        <taxon>Vertebrata</taxon>
        <taxon>Euteleostomi</taxon>
        <taxon>Mammalia</taxon>
        <taxon>Eutheria</taxon>
        <taxon>Euarchontoglires</taxon>
        <taxon>Glires</taxon>
        <taxon>Rodentia</taxon>
        <taxon>Myomorpha</taxon>
        <taxon>Muroidea</taxon>
        <taxon>Muridae</taxon>
        <taxon>Murinae</taxon>
        <taxon>Mus</taxon>
        <taxon>Mus</taxon>
    </lineage>
</organism>
<evidence type="ECO:0000250" key="1"/>
<evidence type="ECO:0000250" key="2">
    <source>
        <dbReference type="UniProtKB" id="P61024"/>
    </source>
</evidence>
<evidence type="ECO:0000305" key="3"/>
<comment type="function">
    <text evidence="1">Binds to the catalytic subunit of the cyclin dependent kinases and is essential for their biological function.</text>
</comment>
<comment type="subunit">
    <text evidence="1">Forms a homohexamer that can probably bind six kinase subunits.</text>
</comment>
<comment type="similarity">
    <text evidence="3">Belongs to the CKS family.</text>
</comment>
<reference key="1">
    <citation type="submission" date="1999-03" db="EMBL/GenBank/DDBJ databases">
        <title>Mouse cks1 sid1334.</title>
        <authorList>
            <person name="Seki N."/>
            <person name="Hattori A."/>
            <person name="Hayashi A."/>
            <person name="Kozuma S."/>
            <person name="Muramatsu M."/>
            <person name="Saito T."/>
        </authorList>
    </citation>
    <scope>NUCLEOTIDE SEQUENCE [MRNA]</scope>
</reference>
<reference key="2">
    <citation type="journal article" date="2005" name="Science">
        <title>The transcriptional landscape of the mammalian genome.</title>
        <authorList>
            <person name="Carninci P."/>
            <person name="Kasukawa T."/>
            <person name="Katayama S."/>
            <person name="Gough J."/>
            <person name="Frith M.C."/>
            <person name="Maeda N."/>
            <person name="Oyama R."/>
            <person name="Ravasi T."/>
            <person name="Lenhard B."/>
            <person name="Wells C."/>
            <person name="Kodzius R."/>
            <person name="Shimokawa K."/>
            <person name="Bajic V.B."/>
            <person name="Brenner S.E."/>
            <person name="Batalov S."/>
            <person name="Forrest A.R."/>
            <person name="Zavolan M."/>
            <person name="Davis M.J."/>
            <person name="Wilming L.G."/>
            <person name="Aidinis V."/>
            <person name="Allen J.E."/>
            <person name="Ambesi-Impiombato A."/>
            <person name="Apweiler R."/>
            <person name="Aturaliya R.N."/>
            <person name="Bailey T.L."/>
            <person name="Bansal M."/>
            <person name="Baxter L."/>
            <person name="Beisel K.W."/>
            <person name="Bersano T."/>
            <person name="Bono H."/>
            <person name="Chalk A.M."/>
            <person name="Chiu K.P."/>
            <person name="Choudhary V."/>
            <person name="Christoffels A."/>
            <person name="Clutterbuck D.R."/>
            <person name="Crowe M.L."/>
            <person name="Dalla E."/>
            <person name="Dalrymple B.P."/>
            <person name="de Bono B."/>
            <person name="Della Gatta G."/>
            <person name="di Bernardo D."/>
            <person name="Down T."/>
            <person name="Engstrom P."/>
            <person name="Fagiolini M."/>
            <person name="Faulkner G."/>
            <person name="Fletcher C.F."/>
            <person name="Fukushima T."/>
            <person name="Furuno M."/>
            <person name="Futaki S."/>
            <person name="Gariboldi M."/>
            <person name="Georgii-Hemming P."/>
            <person name="Gingeras T.R."/>
            <person name="Gojobori T."/>
            <person name="Green R.E."/>
            <person name="Gustincich S."/>
            <person name="Harbers M."/>
            <person name="Hayashi Y."/>
            <person name="Hensch T.K."/>
            <person name="Hirokawa N."/>
            <person name="Hill D."/>
            <person name="Huminiecki L."/>
            <person name="Iacono M."/>
            <person name="Ikeo K."/>
            <person name="Iwama A."/>
            <person name="Ishikawa T."/>
            <person name="Jakt M."/>
            <person name="Kanapin A."/>
            <person name="Katoh M."/>
            <person name="Kawasawa Y."/>
            <person name="Kelso J."/>
            <person name="Kitamura H."/>
            <person name="Kitano H."/>
            <person name="Kollias G."/>
            <person name="Krishnan S.P."/>
            <person name="Kruger A."/>
            <person name="Kummerfeld S.K."/>
            <person name="Kurochkin I.V."/>
            <person name="Lareau L.F."/>
            <person name="Lazarevic D."/>
            <person name="Lipovich L."/>
            <person name="Liu J."/>
            <person name="Liuni S."/>
            <person name="McWilliam S."/>
            <person name="Madan Babu M."/>
            <person name="Madera M."/>
            <person name="Marchionni L."/>
            <person name="Matsuda H."/>
            <person name="Matsuzawa S."/>
            <person name="Miki H."/>
            <person name="Mignone F."/>
            <person name="Miyake S."/>
            <person name="Morris K."/>
            <person name="Mottagui-Tabar S."/>
            <person name="Mulder N."/>
            <person name="Nakano N."/>
            <person name="Nakauchi H."/>
            <person name="Ng P."/>
            <person name="Nilsson R."/>
            <person name="Nishiguchi S."/>
            <person name="Nishikawa S."/>
            <person name="Nori F."/>
            <person name="Ohara O."/>
            <person name="Okazaki Y."/>
            <person name="Orlando V."/>
            <person name="Pang K.C."/>
            <person name="Pavan W.J."/>
            <person name="Pavesi G."/>
            <person name="Pesole G."/>
            <person name="Petrovsky N."/>
            <person name="Piazza S."/>
            <person name="Reed J."/>
            <person name="Reid J.F."/>
            <person name="Ring B.Z."/>
            <person name="Ringwald M."/>
            <person name="Rost B."/>
            <person name="Ruan Y."/>
            <person name="Salzberg S.L."/>
            <person name="Sandelin A."/>
            <person name="Schneider C."/>
            <person name="Schoenbach C."/>
            <person name="Sekiguchi K."/>
            <person name="Semple C.A."/>
            <person name="Seno S."/>
            <person name="Sessa L."/>
            <person name="Sheng Y."/>
            <person name="Shibata Y."/>
            <person name="Shimada H."/>
            <person name="Shimada K."/>
            <person name="Silva D."/>
            <person name="Sinclair B."/>
            <person name="Sperling S."/>
            <person name="Stupka E."/>
            <person name="Sugiura K."/>
            <person name="Sultana R."/>
            <person name="Takenaka Y."/>
            <person name="Taki K."/>
            <person name="Tammoja K."/>
            <person name="Tan S.L."/>
            <person name="Tang S."/>
            <person name="Taylor M.S."/>
            <person name="Tegner J."/>
            <person name="Teichmann S.A."/>
            <person name="Ueda H.R."/>
            <person name="van Nimwegen E."/>
            <person name="Verardo R."/>
            <person name="Wei C.L."/>
            <person name="Yagi K."/>
            <person name="Yamanishi H."/>
            <person name="Zabarovsky E."/>
            <person name="Zhu S."/>
            <person name="Zimmer A."/>
            <person name="Hide W."/>
            <person name="Bult C."/>
            <person name="Grimmond S.M."/>
            <person name="Teasdale R.D."/>
            <person name="Liu E.T."/>
            <person name="Brusic V."/>
            <person name="Quackenbush J."/>
            <person name="Wahlestedt C."/>
            <person name="Mattick J.S."/>
            <person name="Hume D.A."/>
            <person name="Kai C."/>
            <person name="Sasaki D."/>
            <person name="Tomaru Y."/>
            <person name="Fukuda S."/>
            <person name="Kanamori-Katayama M."/>
            <person name="Suzuki M."/>
            <person name="Aoki J."/>
            <person name="Arakawa T."/>
            <person name="Iida J."/>
            <person name="Imamura K."/>
            <person name="Itoh M."/>
            <person name="Kato T."/>
            <person name="Kawaji H."/>
            <person name="Kawagashira N."/>
            <person name="Kawashima T."/>
            <person name="Kojima M."/>
            <person name="Kondo S."/>
            <person name="Konno H."/>
            <person name="Nakano K."/>
            <person name="Ninomiya N."/>
            <person name="Nishio T."/>
            <person name="Okada M."/>
            <person name="Plessy C."/>
            <person name="Shibata K."/>
            <person name="Shiraki T."/>
            <person name="Suzuki S."/>
            <person name="Tagami M."/>
            <person name="Waki K."/>
            <person name="Watahiki A."/>
            <person name="Okamura-Oho Y."/>
            <person name="Suzuki H."/>
            <person name="Kawai J."/>
            <person name="Hayashizaki Y."/>
        </authorList>
    </citation>
    <scope>NUCLEOTIDE SEQUENCE [LARGE SCALE MRNA]</scope>
    <source>
        <strain>C57BL/6J</strain>
    </source>
</reference>
<reference key="3">
    <citation type="journal article" date="2004" name="Genome Res.">
        <title>The status, quality, and expansion of the NIH full-length cDNA project: the Mammalian Gene Collection (MGC).</title>
        <authorList>
            <consortium name="The MGC Project Team"/>
        </authorList>
    </citation>
    <scope>NUCLEOTIDE SEQUENCE [LARGE SCALE MRNA]</scope>
    <source>
        <strain>C57BL/6J</strain>
        <tissue>Brain</tissue>
    </source>
</reference>
<keyword id="KW-0007">Acetylation</keyword>
<keyword id="KW-0131">Cell cycle</keyword>
<keyword id="KW-0132">Cell division</keyword>
<keyword id="KW-1185">Reference proteome</keyword>
<sequence>MSHKQIYYSDKYDDEEFEYRHVMLPKDIAKLVPKTHLMSESEWRNLGVQQSQGWVHYMIHEPEPHILLFRRPLPKKPKK</sequence>